<evidence type="ECO:0000255" key="1">
    <source>
        <dbReference type="HAMAP-Rule" id="MF_00201"/>
    </source>
</evidence>
<keyword id="KW-0227">DNA damage</keyword>
<keyword id="KW-0233">DNA recombination</keyword>
<keyword id="KW-0234">DNA repair</keyword>
<keyword id="KW-1185">Reference proteome</keyword>
<protein>
    <recommendedName>
        <fullName evidence="1">DNA repair protein RecO</fullName>
    </recommendedName>
    <alternativeName>
        <fullName evidence="1">Recombination protein O</fullName>
    </alternativeName>
</protein>
<dbReference type="EMBL" id="AE016958">
    <property type="protein sequence ID" value="AAS04459.1"/>
    <property type="molecule type" value="Genomic_DNA"/>
</dbReference>
<dbReference type="RefSeq" id="WP_003878322.1">
    <property type="nucleotide sequence ID" value="NZ_CP106873.1"/>
</dbReference>
<dbReference type="SMR" id="Q73Y16"/>
<dbReference type="STRING" id="262316.MAP_2142c"/>
<dbReference type="GeneID" id="75269633"/>
<dbReference type="KEGG" id="mpa:MAP_2142c"/>
<dbReference type="eggNOG" id="COG1381">
    <property type="taxonomic scope" value="Bacteria"/>
</dbReference>
<dbReference type="HOGENOM" id="CLU_066632_1_1_11"/>
<dbReference type="Proteomes" id="UP000000580">
    <property type="component" value="Chromosome"/>
</dbReference>
<dbReference type="GO" id="GO:0043590">
    <property type="term" value="C:bacterial nucleoid"/>
    <property type="evidence" value="ECO:0007669"/>
    <property type="project" value="TreeGrafter"/>
</dbReference>
<dbReference type="GO" id="GO:0006310">
    <property type="term" value="P:DNA recombination"/>
    <property type="evidence" value="ECO:0007669"/>
    <property type="project" value="UniProtKB-UniRule"/>
</dbReference>
<dbReference type="GO" id="GO:0006302">
    <property type="term" value="P:double-strand break repair"/>
    <property type="evidence" value="ECO:0007669"/>
    <property type="project" value="TreeGrafter"/>
</dbReference>
<dbReference type="FunFam" id="2.40.50.140:FF:000176">
    <property type="entry name" value="DNA repair protein RecO"/>
    <property type="match status" value="1"/>
</dbReference>
<dbReference type="Gene3D" id="2.40.50.140">
    <property type="entry name" value="Nucleic acid-binding proteins"/>
    <property type="match status" value="1"/>
</dbReference>
<dbReference type="Gene3D" id="1.20.1440.120">
    <property type="entry name" value="Recombination protein O, C-terminal domain"/>
    <property type="match status" value="1"/>
</dbReference>
<dbReference type="HAMAP" id="MF_00201">
    <property type="entry name" value="RecO"/>
    <property type="match status" value="1"/>
</dbReference>
<dbReference type="InterPro" id="IPR037278">
    <property type="entry name" value="ARFGAP/RecO"/>
</dbReference>
<dbReference type="InterPro" id="IPR022572">
    <property type="entry name" value="DNA_rep/recomb_RecO_N"/>
</dbReference>
<dbReference type="InterPro" id="IPR012340">
    <property type="entry name" value="NA-bd_OB-fold"/>
</dbReference>
<dbReference type="InterPro" id="IPR003717">
    <property type="entry name" value="RecO"/>
</dbReference>
<dbReference type="InterPro" id="IPR042242">
    <property type="entry name" value="RecO_C"/>
</dbReference>
<dbReference type="NCBIfam" id="TIGR00613">
    <property type="entry name" value="reco"/>
    <property type="match status" value="1"/>
</dbReference>
<dbReference type="PANTHER" id="PTHR33991">
    <property type="entry name" value="DNA REPAIR PROTEIN RECO"/>
    <property type="match status" value="1"/>
</dbReference>
<dbReference type="PANTHER" id="PTHR33991:SF1">
    <property type="entry name" value="DNA REPAIR PROTEIN RECO"/>
    <property type="match status" value="1"/>
</dbReference>
<dbReference type="Pfam" id="PF02565">
    <property type="entry name" value="RecO_C"/>
    <property type="match status" value="1"/>
</dbReference>
<dbReference type="Pfam" id="PF11967">
    <property type="entry name" value="RecO_N"/>
    <property type="match status" value="1"/>
</dbReference>
<dbReference type="SUPFAM" id="SSF57863">
    <property type="entry name" value="ArfGap/RecO-like zinc finger"/>
    <property type="match status" value="1"/>
</dbReference>
<dbReference type="SUPFAM" id="SSF50249">
    <property type="entry name" value="Nucleic acid-binding proteins"/>
    <property type="match status" value="1"/>
</dbReference>
<sequence length="265" mass="29044">MRLYRDRAVVLRQHKLGEADRIVTLLTRDHGLVRAVAKGVRRTRSKFGARLEPFAHIDAQLHPGRNLDIVTQVVSIDAFATDIVSDYGRYTCACAMLETAERLAGEERAPAPALHGLTVSALRAVADGRRSRDLLLDAYLLRAMGIAGWAPALTECARCATPGPHRAFHVGAGGSVCPHCRPAGSTTPPPGVLDLMSALHDGDWEFAEQTPQSHRNYVSGLVAAHLQWHLERQLKTLPLVERTYHIDRTIADQRATLIGQDMDCG</sequence>
<gene>
    <name evidence="1" type="primary">recO</name>
    <name type="ordered locus">MAP_2142c</name>
</gene>
<proteinExistence type="inferred from homology"/>
<comment type="function">
    <text evidence="1">Involved in DNA repair and RecF pathway recombination.</text>
</comment>
<comment type="similarity">
    <text evidence="1">Belongs to the RecO family.</text>
</comment>
<accession>Q73Y16</accession>
<name>RECO_MYCPA</name>
<reference key="1">
    <citation type="journal article" date="2005" name="Proc. Natl. Acad. Sci. U.S.A.">
        <title>The complete genome sequence of Mycobacterium avium subspecies paratuberculosis.</title>
        <authorList>
            <person name="Li L."/>
            <person name="Bannantine J.P."/>
            <person name="Zhang Q."/>
            <person name="Amonsin A."/>
            <person name="May B.J."/>
            <person name="Alt D."/>
            <person name="Banerji N."/>
            <person name="Kanjilal S."/>
            <person name="Kapur V."/>
        </authorList>
    </citation>
    <scope>NUCLEOTIDE SEQUENCE [LARGE SCALE GENOMIC DNA]</scope>
    <source>
        <strain>ATCC BAA-968 / K-10</strain>
    </source>
</reference>
<organism>
    <name type="scientific">Mycolicibacterium paratuberculosis (strain ATCC BAA-968 / K-10)</name>
    <name type="common">Mycobacterium paratuberculosis</name>
    <dbReference type="NCBI Taxonomy" id="262316"/>
    <lineage>
        <taxon>Bacteria</taxon>
        <taxon>Bacillati</taxon>
        <taxon>Actinomycetota</taxon>
        <taxon>Actinomycetes</taxon>
        <taxon>Mycobacteriales</taxon>
        <taxon>Mycobacteriaceae</taxon>
        <taxon>Mycobacterium</taxon>
        <taxon>Mycobacterium avium complex (MAC)</taxon>
    </lineage>
</organism>
<feature type="chain" id="PRO_0000204971" description="DNA repair protein RecO">
    <location>
        <begin position="1"/>
        <end position="265"/>
    </location>
</feature>